<gene>
    <name evidence="4" type="ordered locus">At1g26450</name>
    <name evidence="5" type="ORF">T1K7.18</name>
</gene>
<name>CBX8D_ARATH</name>
<accession>Q9FZD0</accession>
<organism evidence="7">
    <name type="scientific">Arabidopsis thaliana</name>
    <name type="common">Mouse-ear cress</name>
    <dbReference type="NCBI Taxonomy" id="3702"/>
    <lineage>
        <taxon>Eukaryota</taxon>
        <taxon>Viridiplantae</taxon>
        <taxon>Streptophyta</taxon>
        <taxon>Embryophyta</taxon>
        <taxon>Tracheophyta</taxon>
        <taxon>Spermatophyta</taxon>
        <taxon>Magnoliopsida</taxon>
        <taxon>eudicotyledons</taxon>
        <taxon>Gunneridae</taxon>
        <taxon>Pentapetalae</taxon>
        <taxon>rosids</taxon>
        <taxon>malvids</taxon>
        <taxon>Brassicales</taxon>
        <taxon>Brassicaceae</taxon>
        <taxon>Camelineae</taxon>
        <taxon>Arabidopsis</taxon>
    </lineage>
</organism>
<reference key="1">
    <citation type="journal article" date="2000" name="Nature">
        <title>Sequence and analysis of chromosome 1 of the plant Arabidopsis thaliana.</title>
        <authorList>
            <person name="Theologis A."/>
            <person name="Ecker J.R."/>
            <person name="Palm C.J."/>
            <person name="Federspiel N.A."/>
            <person name="Kaul S."/>
            <person name="White O."/>
            <person name="Alonso J."/>
            <person name="Altafi H."/>
            <person name="Araujo R."/>
            <person name="Bowman C.L."/>
            <person name="Brooks S.Y."/>
            <person name="Buehler E."/>
            <person name="Chan A."/>
            <person name="Chao Q."/>
            <person name="Chen H."/>
            <person name="Cheuk R.F."/>
            <person name="Chin C.W."/>
            <person name="Chung M.K."/>
            <person name="Conn L."/>
            <person name="Conway A.B."/>
            <person name="Conway A.R."/>
            <person name="Creasy T.H."/>
            <person name="Dewar K."/>
            <person name="Dunn P."/>
            <person name="Etgu P."/>
            <person name="Feldblyum T.V."/>
            <person name="Feng J.-D."/>
            <person name="Fong B."/>
            <person name="Fujii C.Y."/>
            <person name="Gill J.E."/>
            <person name="Goldsmith A.D."/>
            <person name="Haas B."/>
            <person name="Hansen N.F."/>
            <person name="Hughes B."/>
            <person name="Huizar L."/>
            <person name="Hunter J.L."/>
            <person name="Jenkins J."/>
            <person name="Johnson-Hopson C."/>
            <person name="Khan S."/>
            <person name="Khaykin E."/>
            <person name="Kim C.J."/>
            <person name="Koo H.L."/>
            <person name="Kremenetskaia I."/>
            <person name="Kurtz D.B."/>
            <person name="Kwan A."/>
            <person name="Lam B."/>
            <person name="Langin-Hooper S."/>
            <person name="Lee A."/>
            <person name="Lee J.M."/>
            <person name="Lenz C.A."/>
            <person name="Li J.H."/>
            <person name="Li Y.-P."/>
            <person name="Lin X."/>
            <person name="Liu S.X."/>
            <person name="Liu Z.A."/>
            <person name="Luros J.S."/>
            <person name="Maiti R."/>
            <person name="Marziali A."/>
            <person name="Militscher J."/>
            <person name="Miranda M."/>
            <person name="Nguyen M."/>
            <person name="Nierman W.C."/>
            <person name="Osborne B.I."/>
            <person name="Pai G."/>
            <person name="Peterson J."/>
            <person name="Pham P.K."/>
            <person name="Rizzo M."/>
            <person name="Rooney T."/>
            <person name="Rowley D."/>
            <person name="Sakano H."/>
            <person name="Salzberg S.L."/>
            <person name="Schwartz J.R."/>
            <person name="Shinn P."/>
            <person name="Southwick A.M."/>
            <person name="Sun H."/>
            <person name="Tallon L.J."/>
            <person name="Tambunga G."/>
            <person name="Toriumi M.J."/>
            <person name="Town C.D."/>
            <person name="Utterback T."/>
            <person name="Van Aken S."/>
            <person name="Vaysberg M."/>
            <person name="Vysotskaia V.S."/>
            <person name="Walker M."/>
            <person name="Wu D."/>
            <person name="Yu G."/>
            <person name="Fraser C.M."/>
            <person name="Venter J.C."/>
            <person name="Davis R.W."/>
        </authorList>
    </citation>
    <scope>NUCLEOTIDE SEQUENCE [LARGE SCALE GENOMIC DNA]</scope>
    <source>
        <strain>cv. Columbia</strain>
    </source>
</reference>
<reference key="2">
    <citation type="journal article" date="2017" name="Plant J.">
        <title>Araport11: a complete reannotation of the Arabidopsis thaliana reference genome.</title>
        <authorList>
            <person name="Cheng C.Y."/>
            <person name="Krishnakumar V."/>
            <person name="Chan A.P."/>
            <person name="Thibaud-Nissen F."/>
            <person name="Schobel S."/>
            <person name="Town C.D."/>
        </authorList>
    </citation>
    <scope>GENOME REANNOTATION</scope>
    <source>
        <strain>cv. Columbia</strain>
    </source>
</reference>
<reference key="3">
    <citation type="journal article" date="2003" name="Science">
        <title>Empirical analysis of transcriptional activity in the Arabidopsis genome.</title>
        <authorList>
            <person name="Yamada K."/>
            <person name="Lim J."/>
            <person name="Dale J.M."/>
            <person name="Chen H."/>
            <person name="Shinn P."/>
            <person name="Palm C.J."/>
            <person name="Southwick A.M."/>
            <person name="Wu H.C."/>
            <person name="Kim C.J."/>
            <person name="Nguyen M."/>
            <person name="Pham P.K."/>
            <person name="Cheuk R.F."/>
            <person name="Karlin-Newmann G."/>
            <person name="Liu S.X."/>
            <person name="Lam B."/>
            <person name="Sakano H."/>
            <person name="Wu T."/>
            <person name="Yu G."/>
            <person name="Miranda M."/>
            <person name="Quach H.L."/>
            <person name="Tripp M."/>
            <person name="Chang C.H."/>
            <person name="Lee J.M."/>
            <person name="Toriumi M.J."/>
            <person name="Chan M.M."/>
            <person name="Tang C.C."/>
            <person name="Onodera C.S."/>
            <person name="Deng J.M."/>
            <person name="Akiyama K."/>
            <person name="Ansari Y."/>
            <person name="Arakawa T."/>
            <person name="Banh J."/>
            <person name="Banno F."/>
            <person name="Bowser L."/>
            <person name="Brooks S.Y."/>
            <person name="Carninci P."/>
            <person name="Chao Q."/>
            <person name="Choy N."/>
            <person name="Enju A."/>
            <person name="Goldsmith A.D."/>
            <person name="Gurjal M."/>
            <person name="Hansen N.F."/>
            <person name="Hayashizaki Y."/>
            <person name="Johnson-Hopson C."/>
            <person name="Hsuan V.W."/>
            <person name="Iida K."/>
            <person name="Karnes M."/>
            <person name="Khan S."/>
            <person name="Koesema E."/>
            <person name="Ishida J."/>
            <person name="Jiang P.X."/>
            <person name="Jones T."/>
            <person name="Kawai J."/>
            <person name="Kamiya A."/>
            <person name="Meyers C."/>
            <person name="Nakajima M."/>
            <person name="Narusaka M."/>
            <person name="Seki M."/>
            <person name="Sakurai T."/>
            <person name="Satou M."/>
            <person name="Tamse R."/>
            <person name="Vaysberg M."/>
            <person name="Wallender E.K."/>
            <person name="Wong C."/>
            <person name="Yamamura Y."/>
            <person name="Yuan S."/>
            <person name="Shinozaki K."/>
            <person name="Davis R.W."/>
            <person name="Theologis A."/>
            <person name="Ecker J.R."/>
        </authorList>
    </citation>
    <scope>NUCLEOTIDE SEQUENCE [LARGE SCALE MRNA]</scope>
    <source>
        <strain>cv. Columbia</strain>
    </source>
</reference>
<reference key="4">
    <citation type="submission" date="2006-07" db="EMBL/GenBank/DDBJ databases">
        <title>Large-scale analysis of RIKEN Arabidopsis full-length (RAFL) cDNAs.</title>
        <authorList>
            <person name="Totoki Y."/>
            <person name="Seki M."/>
            <person name="Ishida J."/>
            <person name="Nakajima M."/>
            <person name="Enju A."/>
            <person name="Kamiya A."/>
            <person name="Narusaka M."/>
            <person name="Shin-i T."/>
            <person name="Nakagawa M."/>
            <person name="Sakamoto N."/>
            <person name="Oishi K."/>
            <person name="Kohara Y."/>
            <person name="Kobayashi M."/>
            <person name="Toyoda A."/>
            <person name="Sakaki Y."/>
            <person name="Sakurai T."/>
            <person name="Iida K."/>
            <person name="Akiyama K."/>
            <person name="Satou M."/>
            <person name="Toyoda T."/>
            <person name="Konagaya A."/>
            <person name="Carninci P."/>
            <person name="Kawai J."/>
            <person name="Hayashizaki Y."/>
            <person name="Shinozaki K."/>
        </authorList>
    </citation>
    <scope>NUCLEOTIDE SEQUENCE [LARGE SCALE MRNA]</scope>
    <source>
        <strain>cv. Columbia</strain>
    </source>
</reference>
<reference key="5">
    <citation type="journal article" date="2014" name="Science">
        <title>Plant development. Arabidopsis NAC45/86 direct sieve element morphogenesis culminating in enucleation.</title>
        <authorList>
            <person name="Furuta K.M."/>
            <person name="Yadav S.R."/>
            <person name="Lehesranta S."/>
            <person name="Belevich I."/>
            <person name="Miyashima S."/>
            <person name="Heo J.O."/>
            <person name="Vaten A."/>
            <person name="Lindgren O."/>
            <person name="De Rybel B."/>
            <person name="Van Isterdael G."/>
            <person name="Somervuo P."/>
            <person name="Lichtenberger R."/>
            <person name="Rocha R."/>
            <person name="Thitamadee S."/>
            <person name="Taehtiharju S."/>
            <person name="Auvinen P."/>
            <person name="Beeckman T."/>
            <person name="Jokitalo E."/>
            <person name="Helariutta Y."/>
        </authorList>
    </citation>
    <scope>INDUCTION BY NAC045 AND NAC086</scope>
    <scope>TISSUE SPECIFICITY</scope>
</reference>
<feature type="signal peptide" evidence="1">
    <location>
        <begin position="1"/>
        <end position="19"/>
    </location>
</feature>
<feature type="chain" id="PRO_0000430892" description="Carbohydrate-binding X8 domain-containing protein" evidence="1">
    <location>
        <begin position="20"/>
        <end position="172"/>
    </location>
</feature>
<feature type="propeptide" id="PRO_0000430893" description="Removed in mature form" evidence="1">
    <location>
        <begin position="173"/>
        <end position="197"/>
    </location>
</feature>
<feature type="region of interest" description="Disordered" evidence="2">
    <location>
        <begin position="101"/>
        <end position="176"/>
    </location>
</feature>
<feature type="compositionally biased region" description="Low complexity" evidence="2">
    <location>
        <begin position="101"/>
        <end position="113"/>
    </location>
</feature>
<feature type="compositionally biased region" description="Polar residues" evidence="2">
    <location>
        <begin position="116"/>
        <end position="125"/>
    </location>
</feature>
<feature type="compositionally biased region" description="Low complexity" evidence="2">
    <location>
        <begin position="126"/>
        <end position="145"/>
    </location>
</feature>
<feature type="compositionally biased region" description="Polar residues" evidence="2">
    <location>
        <begin position="146"/>
        <end position="155"/>
    </location>
</feature>
<feature type="compositionally biased region" description="Low complexity" evidence="2">
    <location>
        <begin position="156"/>
        <end position="170"/>
    </location>
</feature>
<feature type="lipid moiety-binding region" description="GPI-anchor amidated asparagine" evidence="1">
    <location>
        <position position="172"/>
    </location>
</feature>
<proteinExistence type="evidence at transcript level"/>
<comment type="subcellular location">
    <subcellularLocation>
        <location evidence="1">Cell membrane</location>
        <topology evidence="1">Lipid-anchor</topology>
        <topology evidence="1">GPI-anchor</topology>
    </subcellularLocation>
</comment>
<comment type="tissue specificity">
    <text evidence="3">Expressed in the sieve elements.</text>
</comment>
<comment type="induction">
    <text evidence="3">Regulated by the transcription factors NAC045 and NAC086.</text>
</comment>
<sequence length="197" mass="20039">MAVLLPLFLLSFMFTYSNAAVCVCKDANELDLQKVIDFACGGGADCAQIQTTGACYQPNTLKNHCDVAVNSYYQKKASTGATCDFNGAAVISTSPPSTTSSCLSSSSSNGTPTAGYPSTGNSTTASPGTTNPSTGNSTNSTLPTNDKPTSSTITFPDSTTMGPSSSTSGDPNGGEELSVRTTTIILLTTIAAVALRV</sequence>
<evidence type="ECO:0000255" key="1"/>
<evidence type="ECO:0000256" key="2">
    <source>
        <dbReference type="SAM" id="MobiDB-lite"/>
    </source>
</evidence>
<evidence type="ECO:0000269" key="3">
    <source>
    </source>
</evidence>
<evidence type="ECO:0000312" key="4">
    <source>
        <dbReference type="Araport" id="AT1G26450"/>
    </source>
</evidence>
<evidence type="ECO:0000312" key="5">
    <source>
        <dbReference type="EMBL" id="AAF98573.1"/>
    </source>
</evidence>
<evidence type="ECO:0000312" key="6">
    <source>
        <dbReference type="EMBL" id="AEE30693.1"/>
    </source>
</evidence>
<evidence type="ECO:0000312" key="7">
    <source>
        <dbReference type="Proteomes" id="UP000006548"/>
    </source>
</evidence>
<keyword id="KW-1003">Cell membrane</keyword>
<keyword id="KW-0325">Glycoprotein</keyword>
<keyword id="KW-0336">GPI-anchor</keyword>
<keyword id="KW-0449">Lipoprotein</keyword>
<keyword id="KW-0472">Membrane</keyword>
<keyword id="KW-1185">Reference proteome</keyword>
<keyword id="KW-0732">Signal</keyword>
<dbReference type="EMBL" id="AC013427">
    <property type="protein sequence ID" value="AAF98573.1"/>
    <property type="molecule type" value="Genomic_DNA"/>
</dbReference>
<dbReference type="EMBL" id="CP002684">
    <property type="protein sequence ID" value="AEE30693.1"/>
    <property type="molecule type" value="Genomic_DNA"/>
</dbReference>
<dbReference type="EMBL" id="BT005854">
    <property type="protein sequence ID" value="AAO64789.1"/>
    <property type="molecule type" value="mRNA"/>
</dbReference>
<dbReference type="EMBL" id="AK228207">
    <property type="protein sequence ID" value="BAF00161.1"/>
    <property type="molecule type" value="mRNA"/>
</dbReference>
<dbReference type="PIR" id="C86391">
    <property type="entry name" value="C86391"/>
</dbReference>
<dbReference type="RefSeq" id="NP_173968.1">
    <property type="nucleotide sequence ID" value="NM_102408.3"/>
</dbReference>
<dbReference type="SMR" id="Q9FZD0"/>
<dbReference type="FunCoup" id="Q9FZD0">
    <property type="interactions" value="22"/>
</dbReference>
<dbReference type="STRING" id="3702.Q9FZD0"/>
<dbReference type="CAZy" id="CBM43">
    <property type="family name" value="Carbohydrate-Binding Module Family 43"/>
</dbReference>
<dbReference type="TCDB" id="1.I.2.1.1">
    <property type="family name" value="the plant plasmodesmata (ppd) family"/>
</dbReference>
<dbReference type="PaxDb" id="3702-AT1G26450.1"/>
<dbReference type="ProteomicsDB" id="223898"/>
<dbReference type="EnsemblPlants" id="AT1G26450.1">
    <property type="protein sequence ID" value="AT1G26450.1"/>
    <property type="gene ID" value="AT1G26450"/>
</dbReference>
<dbReference type="GeneID" id="839186"/>
<dbReference type="Gramene" id="AT1G26450.1">
    <property type="protein sequence ID" value="AT1G26450.1"/>
    <property type="gene ID" value="AT1G26450"/>
</dbReference>
<dbReference type="KEGG" id="ath:AT1G26450"/>
<dbReference type="Araport" id="AT1G26450"/>
<dbReference type="TAIR" id="AT1G26450"/>
<dbReference type="eggNOG" id="ENOG502S0BH">
    <property type="taxonomic scope" value="Eukaryota"/>
</dbReference>
<dbReference type="HOGENOM" id="CLU_031666_1_0_1"/>
<dbReference type="InParanoid" id="Q9FZD0"/>
<dbReference type="OMA" id="CICKPEL"/>
<dbReference type="OrthoDB" id="1930814at2759"/>
<dbReference type="PRO" id="PR:Q9FZD0"/>
<dbReference type="Proteomes" id="UP000006548">
    <property type="component" value="Chromosome 1"/>
</dbReference>
<dbReference type="ExpressionAtlas" id="Q9FZD0">
    <property type="expression patterns" value="baseline and differential"/>
</dbReference>
<dbReference type="GO" id="GO:0005634">
    <property type="term" value="C:nucleus"/>
    <property type="evidence" value="ECO:0007005"/>
    <property type="project" value="TAIR"/>
</dbReference>
<dbReference type="GO" id="GO:0005886">
    <property type="term" value="C:plasma membrane"/>
    <property type="evidence" value="ECO:0007669"/>
    <property type="project" value="UniProtKB-SubCell"/>
</dbReference>
<dbReference type="GO" id="GO:0009506">
    <property type="term" value="C:plasmodesma"/>
    <property type="evidence" value="ECO:0007669"/>
    <property type="project" value="UniProtKB-ARBA"/>
</dbReference>
<dbReference type="GO" id="GO:0098552">
    <property type="term" value="C:side of membrane"/>
    <property type="evidence" value="ECO:0007669"/>
    <property type="project" value="UniProtKB-KW"/>
</dbReference>
<dbReference type="Gene3D" id="1.20.58.1040">
    <property type="match status" value="1"/>
</dbReference>
<dbReference type="InterPro" id="IPR012946">
    <property type="entry name" value="X8"/>
</dbReference>
<dbReference type="InterPro" id="IPR044788">
    <property type="entry name" value="X8_dom_prot"/>
</dbReference>
<dbReference type="PANTHER" id="PTHR31044">
    <property type="entry name" value="BETA-1,3 GLUCANASE"/>
    <property type="match status" value="1"/>
</dbReference>
<dbReference type="PANTHER" id="PTHR31044:SF87">
    <property type="entry name" value="CARBOHYDRATE-BINDING X8 DOMAIN-CONTAINING PROTEIN"/>
    <property type="match status" value="1"/>
</dbReference>
<dbReference type="Pfam" id="PF07983">
    <property type="entry name" value="X8"/>
    <property type="match status" value="1"/>
</dbReference>
<dbReference type="SMART" id="SM00768">
    <property type="entry name" value="X8"/>
    <property type="match status" value="1"/>
</dbReference>
<protein>
    <recommendedName>
        <fullName evidence="6">Carbohydrate-binding X8 domain-containing protein</fullName>
    </recommendedName>
</protein>